<reference key="1">
    <citation type="journal article" date="2011" name="MBio">
        <title>Novel metabolic attributes of the genus Cyanothece, comprising a group of unicellular nitrogen-fixing Cyanobacteria.</title>
        <authorList>
            <person name="Bandyopadhyay A."/>
            <person name="Elvitigala T."/>
            <person name="Welsh E."/>
            <person name="Stockel J."/>
            <person name="Liberton M."/>
            <person name="Min H."/>
            <person name="Sherman L.A."/>
            <person name="Pakrasi H.B."/>
        </authorList>
    </citation>
    <scope>NUCLEOTIDE SEQUENCE [LARGE SCALE GENOMIC DNA]</scope>
    <source>
        <strain>PCC 7424</strain>
    </source>
</reference>
<proteinExistence type="inferred from homology"/>
<sequence>MMIYYRTVRLGDTDAAGVVYFATALSICHEAYEASLEQAYINLRKFFNDPEQAIPIVHGEIDFFRPLFCGEKLEIHLLARQLKDSEFEIEYQIFKGSSEGEKAARALTRHVCINPISRQRSRLPDLMVQWLARINTTESERLY</sequence>
<dbReference type="EC" id="3.1.2.28" evidence="1"/>
<dbReference type="EMBL" id="CP001291">
    <property type="protein sequence ID" value="ACK68923.1"/>
    <property type="molecule type" value="Genomic_DNA"/>
</dbReference>
<dbReference type="RefSeq" id="WP_012597870.1">
    <property type="nucleotide sequence ID" value="NC_011729.1"/>
</dbReference>
<dbReference type="SMR" id="B7KDA3"/>
<dbReference type="STRING" id="65393.PCC7424_0457"/>
<dbReference type="KEGG" id="cyc:PCC7424_0457"/>
<dbReference type="eggNOG" id="COG0824">
    <property type="taxonomic scope" value="Bacteria"/>
</dbReference>
<dbReference type="HOGENOM" id="CLU_101141_5_3_3"/>
<dbReference type="OrthoDB" id="9800856at2"/>
<dbReference type="UniPathway" id="UPA00995"/>
<dbReference type="UniPathway" id="UPA01057">
    <property type="reaction ID" value="UER01033"/>
</dbReference>
<dbReference type="Proteomes" id="UP000002384">
    <property type="component" value="Chromosome"/>
</dbReference>
<dbReference type="GO" id="GO:0061522">
    <property type="term" value="F:1,4-dihydroxy-2-naphthoyl-CoA thioesterase activity"/>
    <property type="evidence" value="ECO:0007669"/>
    <property type="project" value="UniProtKB-EC"/>
</dbReference>
<dbReference type="GO" id="GO:0047617">
    <property type="term" value="F:fatty acyl-CoA hydrolase activity"/>
    <property type="evidence" value="ECO:0007669"/>
    <property type="project" value="TreeGrafter"/>
</dbReference>
<dbReference type="GO" id="GO:0042372">
    <property type="term" value="P:phylloquinone biosynthetic process"/>
    <property type="evidence" value="ECO:0007669"/>
    <property type="project" value="UniProtKB-UniRule"/>
</dbReference>
<dbReference type="CDD" id="cd00586">
    <property type="entry name" value="4HBT"/>
    <property type="match status" value="1"/>
</dbReference>
<dbReference type="Gene3D" id="3.10.129.10">
    <property type="entry name" value="Hotdog Thioesterase"/>
    <property type="match status" value="1"/>
</dbReference>
<dbReference type="HAMAP" id="MF_02101">
    <property type="entry name" value="DHNA_CoA_hydrolase"/>
    <property type="match status" value="1"/>
</dbReference>
<dbReference type="InterPro" id="IPR050563">
    <property type="entry name" value="4-hydroxybenzoyl-CoA_TE"/>
</dbReference>
<dbReference type="InterPro" id="IPR022829">
    <property type="entry name" value="DHNA_CoA_hydrolase"/>
</dbReference>
<dbReference type="InterPro" id="IPR029069">
    <property type="entry name" value="HotDog_dom_sf"/>
</dbReference>
<dbReference type="PANTHER" id="PTHR31793">
    <property type="entry name" value="4-HYDROXYBENZOYL-COA THIOESTERASE FAMILY MEMBER"/>
    <property type="match status" value="1"/>
</dbReference>
<dbReference type="PANTHER" id="PTHR31793:SF37">
    <property type="entry name" value="ACYL-COA THIOESTER HYDROLASE YBGC"/>
    <property type="match status" value="1"/>
</dbReference>
<dbReference type="Pfam" id="PF13279">
    <property type="entry name" value="4HBT_2"/>
    <property type="match status" value="1"/>
</dbReference>
<dbReference type="SUPFAM" id="SSF54637">
    <property type="entry name" value="Thioesterase/thiol ester dehydrase-isomerase"/>
    <property type="match status" value="1"/>
</dbReference>
<name>DNCH_GLOC7</name>
<organism>
    <name type="scientific">Gloeothece citriformis (strain PCC 7424)</name>
    <name type="common">Cyanothece sp. (strain PCC 7424)</name>
    <dbReference type="NCBI Taxonomy" id="65393"/>
    <lineage>
        <taxon>Bacteria</taxon>
        <taxon>Bacillati</taxon>
        <taxon>Cyanobacteriota</taxon>
        <taxon>Cyanophyceae</taxon>
        <taxon>Oscillatoriophycideae</taxon>
        <taxon>Chroococcales</taxon>
        <taxon>Aphanothecaceae</taxon>
        <taxon>Gloeothece</taxon>
        <taxon>Gloeothece citriformis</taxon>
    </lineage>
</organism>
<evidence type="ECO:0000255" key="1">
    <source>
        <dbReference type="HAMAP-Rule" id="MF_02101"/>
    </source>
</evidence>
<gene>
    <name type="ordered locus">PCC7424_0457</name>
</gene>
<protein>
    <recommendedName>
        <fullName evidence="1">1,4-dihydroxy-2-naphthoyl-CoA hydrolase</fullName>
        <shortName evidence="1">DHNA-CoA hydrolase</shortName>
        <ecNumber evidence="1">3.1.2.28</ecNumber>
    </recommendedName>
    <alternativeName>
        <fullName evidence="1">DHNA-CoA thioesterase</fullName>
    </alternativeName>
</protein>
<accession>B7KDA3</accession>
<feature type="chain" id="PRO_0000377011" description="1,4-dihydroxy-2-naphthoyl-CoA hydrolase">
    <location>
        <begin position="1"/>
        <end position="143"/>
    </location>
</feature>
<feature type="active site" evidence="1">
    <location>
        <position position="14"/>
    </location>
</feature>
<keyword id="KW-0378">Hydrolase</keyword>
<keyword id="KW-1185">Reference proteome</keyword>
<comment type="function">
    <text evidence="1">Catalyzes the hydrolysis of 1,4-dihydroxy-2-naphthoyl-CoA (DHNA-CoA) to 1,4-dihydroxy-2-naphthoate (DHNA), a reaction involved in phylloquinone (vitamin K1) biosynthesis.</text>
</comment>
<comment type="catalytic activity">
    <reaction evidence="1">
        <text>1,4-dihydroxy-2-naphthoyl-CoA + H2O = 1,4-dihydroxy-2-naphthoate + CoA + H(+)</text>
        <dbReference type="Rhea" id="RHEA:26309"/>
        <dbReference type="ChEBI" id="CHEBI:11173"/>
        <dbReference type="ChEBI" id="CHEBI:15377"/>
        <dbReference type="ChEBI" id="CHEBI:15378"/>
        <dbReference type="ChEBI" id="CHEBI:57287"/>
        <dbReference type="ChEBI" id="CHEBI:58897"/>
        <dbReference type="EC" id="3.1.2.28"/>
    </reaction>
</comment>
<comment type="pathway">
    <text evidence="1">Cofactor biosynthesis; phylloquinone biosynthesis.</text>
</comment>
<comment type="pathway">
    <text evidence="1">Quinol/quinone metabolism; 1,4-dihydroxy-2-naphthoate biosynthesis; 1,4-dihydroxy-2-naphthoate from chorismate: step 7/7.</text>
</comment>
<comment type="similarity">
    <text evidence="1">Belongs to the 4-hydroxybenzoyl-CoA thioesterase family. DHNA-CoA hydrolase subfamily.</text>
</comment>